<comment type="function">
    <text evidence="1">Confers DNA tethering and processivity to DNA polymerases and other proteins. Acts as a clamp, forming a ring around DNA (a reaction catalyzed by the clamp-loading complex) which diffuses in an ATP-independent manner freely and bidirectionally along dsDNA. Initially characterized for its ability to contact the catalytic subunit of DNA polymerase III (Pol III), a complex, multichain enzyme responsible for most of the replicative synthesis in bacteria; Pol III exhibits 3'-5' exonuclease proofreading activity. The beta chain is required for initiation of replication as well as for processivity of DNA replication.</text>
</comment>
<comment type="subunit">
    <text evidence="1">Forms a ring-shaped head-to-tail homodimer around DNA which binds and tethers DNA polymerases and other proteins to the DNA. The DNA replisome complex has a single clamp-loading complex (3 tau and 1 each of delta, delta', psi and chi subunits) which binds 3 Pol III cores (1 core on the leading strand and 2 on the lagging strand) each with a beta sliding clamp dimer. Additional proteins in the replisome are other copies of gamma, psi and chi, Ssb, DNA helicase and RNA primase.</text>
</comment>
<comment type="subcellular location">
    <subcellularLocation>
        <location evidence="1">Cytoplasm</location>
    </subcellularLocation>
</comment>
<comment type="similarity">
    <text evidence="2">Belongs to the beta sliding clamp family.</text>
</comment>
<reference key="1">
    <citation type="journal article" date="2003" name="Mol. Microbiol.">
        <title>Genome-based analysis of virulence genes in a non-biofilm-forming Staphylococcus epidermidis strain (ATCC 12228).</title>
        <authorList>
            <person name="Zhang Y.-Q."/>
            <person name="Ren S.-X."/>
            <person name="Li H.-L."/>
            <person name="Wang Y.-X."/>
            <person name="Fu G."/>
            <person name="Yang J."/>
            <person name="Qin Z.-Q."/>
            <person name="Miao Y.-G."/>
            <person name="Wang W.-Y."/>
            <person name="Chen R.-S."/>
            <person name="Shen Y."/>
            <person name="Chen Z."/>
            <person name="Yuan Z.-H."/>
            <person name="Zhao G.-P."/>
            <person name="Qu D."/>
            <person name="Danchin A."/>
            <person name="Wen Y.-M."/>
        </authorList>
    </citation>
    <scope>NUCLEOTIDE SEQUENCE [LARGE SCALE GENOMIC DNA]</scope>
    <source>
        <strain>ATCC 12228 / FDA PCI 1200</strain>
    </source>
</reference>
<gene>
    <name type="primary">dnaN</name>
    <name type="ordered locus">SE_0002</name>
</gene>
<feature type="chain" id="PRO_0000105469" description="Beta sliding clamp">
    <location>
        <begin position="1"/>
        <end position="377"/>
    </location>
</feature>
<proteinExistence type="inferred from homology"/>
<name>DPO3B_STAES</name>
<accession>Q8CQK6</accession>
<dbReference type="EMBL" id="AE015929">
    <property type="protein sequence ID" value="AAO03599.1"/>
    <property type="molecule type" value="Genomic_DNA"/>
</dbReference>
<dbReference type="RefSeq" id="NP_763557.1">
    <property type="nucleotide sequence ID" value="NC_004461.1"/>
</dbReference>
<dbReference type="RefSeq" id="WP_001831813.1">
    <property type="nucleotide sequence ID" value="NZ_WBME01000012.1"/>
</dbReference>
<dbReference type="SMR" id="Q8CQK6"/>
<dbReference type="GeneID" id="50017416"/>
<dbReference type="KEGG" id="sep:SE_0002"/>
<dbReference type="PATRIC" id="fig|176280.10.peg.2"/>
<dbReference type="eggNOG" id="COG0592">
    <property type="taxonomic scope" value="Bacteria"/>
</dbReference>
<dbReference type="HOGENOM" id="CLU_038149_2_0_9"/>
<dbReference type="OrthoDB" id="8421503at2"/>
<dbReference type="Proteomes" id="UP000001411">
    <property type="component" value="Chromosome"/>
</dbReference>
<dbReference type="GO" id="GO:0005737">
    <property type="term" value="C:cytoplasm"/>
    <property type="evidence" value="ECO:0007669"/>
    <property type="project" value="UniProtKB-SubCell"/>
</dbReference>
<dbReference type="GO" id="GO:0009360">
    <property type="term" value="C:DNA polymerase III complex"/>
    <property type="evidence" value="ECO:0007669"/>
    <property type="project" value="InterPro"/>
</dbReference>
<dbReference type="GO" id="GO:0008408">
    <property type="term" value="F:3'-5' exonuclease activity"/>
    <property type="evidence" value="ECO:0007669"/>
    <property type="project" value="InterPro"/>
</dbReference>
<dbReference type="GO" id="GO:0003677">
    <property type="term" value="F:DNA binding"/>
    <property type="evidence" value="ECO:0007669"/>
    <property type="project" value="UniProtKB-KW"/>
</dbReference>
<dbReference type="GO" id="GO:0003887">
    <property type="term" value="F:DNA-directed DNA polymerase activity"/>
    <property type="evidence" value="ECO:0007669"/>
    <property type="project" value="UniProtKB-KW"/>
</dbReference>
<dbReference type="GO" id="GO:0006271">
    <property type="term" value="P:DNA strand elongation involved in DNA replication"/>
    <property type="evidence" value="ECO:0007669"/>
    <property type="project" value="TreeGrafter"/>
</dbReference>
<dbReference type="CDD" id="cd00140">
    <property type="entry name" value="beta_clamp"/>
    <property type="match status" value="1"/>
</dbReference>
<dbReference type="FunFam" id="3.10.150.10:FF:000007">
    <property type="entry name" value="Beta sliding clamp"/>
    <property type="match status" value="1"/>
</dbReference>
<dbReference type="Gene3D" id="3.70.10.10">
    <property type="match status" value="1"/>
</dbReference>
<dbReference type="Gene3D" id="3.10.150.10">
    <property type="entry name" value="DNA Polymerase III, subunit A, domain 2"/>
    <property type="match status" value="1"/>
</dbReference>
<dbReference type="InterPro" id="IPR046938">
    <property type="entry name" value="DNA_clamp_sf"/>
</dbReference>
<dbReference type="InterPro" id="IPR001001">
    <property type="entry name" value="DNA_polIII_beta"/>
</dbReference>
<dbReference type="InterPro" id="IPR022635">
    <property type="entry name" value="DNA_polIII_beta_C"/>
</dbReference>
<dbReference type="InterPro" id="IPR022637">
    <property type="entry name" value="DNA_polIII_beta_cen"/>
</dbReference>
<dbReference type="InterPro" id="IPR022634">
    <property type="entry name" value="DNA_polIII_beta_N"/>
</dbReference>
<dbReference type="NCBIfam" id="TIGR00663">
    <property type="entry name" value="dnan"/>
    <property type="match status" value="1"/>
</dbReference>
<dbReference type="PANTHER" id="PTHR30478:SF0">
    <property type="entry name" value="BETA SLIDING CLAMP"/>
    <property type="match status" value="1"/>
</dbReference>
<dbReference type="PANTHER" id="PTHR30478">
    <property type="entry name" value="DNA POLYMERASE III SUBUNIT BETA"/>
    <property type="match status" value="1"/>
</dbReference>
<dbReference type="Pfam" id="PF00712">
    <property type="entry name" value="DNA_pol3_beta"/>
    <property type="match status" value="1"/>
</dbReference>
<dbReference type="Pfam" id="PF02767">
    <property type="entry name" value="DNA_pol3_beta_2"/>
    <property type="match status" value="1"/>
</dbReference>
<dbReference type="Pfam" id="PF02768">
    <property type="entry name" value="DNA_pol3_beta_3"/>
    <property type="match status" value="1"/>
</dbReference>
<dbReference type="PIRSF" id="PIRSF000804">
    <property type="entry name" value="DNA_pol_III_b"/>
    <property type="match status" value="1"/>
</dbReference>
<dbReference type="SMART" id="SM00480">
    <property type="entry name" value="POL3Bc"/>
    <property type="match status" value="1"/>
</dbReference>
<dbReference type="SUPFAM" id="SSF55979">
    <property type="entry name" value="DNA clamp"/>
    <property type="match status" value="3"/>
</dbReference>
<organism>
    <name type="scientific">Staphylococcus epidermidis (strain ATCC 12228 / FDA PCI 1200)</name>
    <dbReference type="NCBI Taxonomy" id="176280"/>
    <lineage>
        <taxon>Bacteria</taxon>
        <taxon>Bacillati</taxon>
        <taxon>Bacillota</taxon>
        <taxon>Bacilli</taxon>
        <taxon>Bacillales</taxon>
        <taxon>Staphylococcaceae</taxon>
        <taxon>Staphylococcus</taxon>
    </lineage>
</organism>
<keyword id="KW-0963">Cytoplasm</keyword>
<keyword id="KW-0235">DNA replication</keyword>
<keyword id="KW-0238">DNA-binding</keyword>
<keyword id="KW-0239">DNA-directed DNA polymerase</keyword>
<keyword id="KW-0548">Nucleotidyltransferase</keyword>
<keyword id="KW-0808">Transferase</keyword>
<protein>
    <recommendedName>
        <fullName>Beta sliding clamp</fullName>
        <shortName>Beta clamp</shortName>
        <shortName>Sliding clamp</shortName>
    </recommendedName>
    <alternativeName>
        <fullName>Beta-clamp processivity factor</fullName>
    </alternativeName>
    <alternativeName>
        <fullName>DNA polymerase III beta sliding clamp subunit</fullName>
    </alternativeName>
    <alternativeName>
        <fullName>DNA polymerase III subunit beta</fullName>
    </alternativeName>
</protein>
<sequence>MMEFTIKRDYFINQLNDTLKAISPRTTLPILTGIKIDAKENEVILTGSDSEISIEITIPKQVDGEEIVEITETGSVVLPGRFFVDIIKKLPGKEVKLSTNEQFQTLITSGHSEFNLSGLDPDQYPLLPEVSRDDAIQLSVKVLKNIIAQTNFAVSTSETRPVLTGVNWLIQDNELICTATDSHRLAVRKLQLEDESENKNVIIPGKALSELNKIMSDSDEDIDIFFASNQVLFRVGNINFISRLLEGHYPDTTRLFPENYEIKLGINNGDFYHAIDRASLLAREGGNNVIKLSTGNELVELSSTSPEIGTVKEEVNANDVEGGNLKISFNSKYMMDALKAIDNDEVEVEFFGTMKPFILKPKDDDSVTQLILPIRTY</sequence>
<evidence type="ECO:0000250" key="1">
    <source>
        <dbReference type="UniProtKB" id="P0A988"/>
    </source>
</evidence>
<evidence type="ECO:0000305" key="2"/>